<protein>
    <recommendedName>
        <fullName evidence="1">Sulfate adenylyltransferase</fullName>
        <ecNumber evidence="1">2.7.7.4</ecNumber>
    </recommendedName>
    <alternativeName>
        <fullName evidence="1">ATP-sulfurylase</fullName>
    </alternativeName>
    <alternativeName>
        <fullName evidence="1">Sulfate adenylate transferase</fullName>
        <shortName evidence="1">SAT</shortName>
    </alternativeName>
</protein>
<feature type="chain" id="PRO_0000340620" description="Sulfate adenylyltransferase">
    <location>
        <begin position="1"/>
        <end position="389"/>
    </location>
</feature>
<organism>
    <name type="scientific">Desulforamulus reducens (strain ATCC BAA-1160 / DSM 100696 / MI-1)</name>
    <name type="common">Desulfotomaculum reducens</name>
    <dbReference type="NCBI Taxonomy" id="349161"/>
    <lineage>
        <taxon>Bacteria</taxon>
        <taxon>Bacillati</taxon>
        <taxon>Bacillota</taxon>
        <taxon>Clostridia</taxon>
        <taxon>Eubacteriales</taxon>
        <taxon>Peptococcaceae</taxon>
        <taxon>Desulforamulus</taxon>
    </lineage>
</organism>
<dbReference type="EC" id="2.7.7.4" evidence="1"/>
<dbReference type="EMBL" id="CP000612">
    <property type="protein sequence ID" value="ABO49175.1"/>
    <property type="molecule type" value="Genomic_DNA"/>
</dbReference>
<dbReference type="RefSeq" id="WP_011877011.1">
    <property type="nucleotide sequence ID" value="NC_009253.1"/>
</dbReference>
<dbReference type="SMR" id="A4J272"/>
<dbReference type="STRING" id="349161.Dred_0635"/>
<dbReference type="KEGG" id="drm:Dred_0635"/>
<dbReference type="eggNOG" id="COG2046">
    <property type="taxonomic scope" value="Bacteria"/>
</dbReference>
<dbReference type="HOGENOM" id="CLU_022950_1_1_9"/>
<dbReference type="OrthoDB" id="9804504at2"/>
<dbReference type="UniPathway" id="UPA00140">
    <property type="reaction ID" value="UER00204"/>
</dbReference>
<dbReference type="Proteomes" id="UP000001556">
    <property type="component" value="Chromosome"/>
</dbReference>
<dbReference type="GO" id="GO:0005524">
    <property type="term" value="F:ATP binding"/>
    <property type="evidence" value="ECO:0007669"/>
    <property type="project" value="UniProtKB-KW"/>
</dbReference>
<dbReference type="GO" id="GO:0004781">
    <property type="term" value="F:sulfate adenylyltransferase (ATP) activity"/>
    <property type="evidence" value="ECO:0007669"/>
    <property type="project" value="UniProtKB-UniRule"/>
</dbReference>
<dbReference type="GO" id="GO:0070814">
    <property type="term" value="P:hydrogen sulfide biosynthetic process"/>
    <property type="evidence" value="ECO:0007669"/>
    <property type="project" value="UniProtKB-UniRule"/>
</dbReference>
<dbReference type="GO" id="GO:0000103">
    <property type="term" value="P:sulfate assimilation"/>
    <property type="evidence" value="ECO:0007669"/>
    <property type="project" value="UniProtKB-UniRule"/>
</dbReference>
<dbReference type="CDD" id="cd00517">
    <property type="entry name" value="ATPS"/>
    <property type="match status" value="1"/>
</dbReference>
<dbReference type="Gene3D" id="3.40.50.620">
    <property type="entry name" value="HUPs"/>
    <property type="match status" value="1"/>
</dbReference>
<dbReference type="Gene3D" id="3.10.400.10">
    <property type="entry name" value="Sulfate adenylyltransferase"/>
    <property type="match status" value="1"/>
</dbReference>
<dbReference type="HAMAP" id="MF_00066">
    <property type="entry name" value="Sulf_adenylyltr"/>
    <property type="match status" value="1"/>
</dbReference>
<dbReference type="InterPro" id="IPR025980">
    <property type="entry name" value="ATP-Sase_PUA-like_dom"/>
</dbReference>
<dbReference type="InterPro" id="IPR015947">
    <property type="entry name" value="PUA-like_sf"/>
</dbReference>
<dbReference type="InterPro" id="IPR014729">
    <property type="entry name" value="Rossmann-like_a/b/a_fold"/>
</dbReference>
<dbReference type="InterPro" id="IPR020792">
    <property type="entry name" value="SO4_adenylyltransferase_pro"/>
</dbReference>
<dbReference type="InterPro" id="IPR024951">
    <property type="entry name" value="Sulfurylase_cat_dom"/>
</dbReference>
<dbReference type="InterPro" id="IPR002650">
    <property type="entry name" value="Sulphate_adenylyltransferase"/>
</dbReference>
<dbReference type="NCBIfam" id="NF003166">
    <property type="entry name" value="PRK04149.1"/>
    <property type="match status" value="1"/>
</dbReference>
<dbReference type="NCBIfam" id="TIGR00339">
    <property type="entry name" value="sopT"/>
    <property type="match status" value="1"/>
</dbReference>
<dbReference type="PANTHER" id="PTHR43509">
    <property type="match status" value="1"/>
</dbReference>
<dbReference type="PANTHER" id="PTHR43509:SF1">
    <property type="entry name" value="SULFATE ADENYLYLTRANSFERASE"/>
    <property type="match status" value="1"/>
</dbReference>
<dbReference type="Pfam" id="PF01747">
    <property type="entry name" value="ATP-sulfurylase"/>
    <property type="match status" value="1"/>
</dbReference>
<dbReference type="Pfam" id="PF14306">
    <property type="entry name" value="PUA_2"/>
    <property type="match status" value="1"/>
</dbReference>
<dbReference type="SUPFAM" id="SSF52374">
    <property type="entry name" value="Nucleotidylyl transferase"/>
    <property type="match status" value="1"/>
</dbReference>
<dbReference type="SUPFAM" id="SSF88697">
    <property type="entry name" value="PUA domain-like"/>
    <property type="match status" value="1"/>
</dbReference>
<accession>A4J272</accession>
<reference key="1">
    <citation type="submission" date="2007-03" db="EMBL/GenBank/DDBJ databases">
        <title>Complete sequence of Desulfotomaculum reducens MI-1.</title>
        <authorList>
            <consortium name="US DOE Joint Genome Institute"/>
            <person name="Copeland A."/>
            <person name="Lucas S."/>
            <person name="Lapidus A."/>
            <person name="Barry K."/>
            <person name="Detter J.C."/>
            <person name="Glavina del Rio T."/>
            <person name="Hammon N."/>
            <person name="Israni S."/>
            <person name="Dalin E."/>
            <person name="Tice H."/>
            <person name="Pitluck S."/>
            <person name="Sims D."/>
            <person name="Brettin T."/>
            <person name="Bruce D."/>
            <person name="Han C."/>
            <person name="Tapia R."/>
            <person name="Schmutz J."/>
            <person name="Larimer F."/>
            <person name="Land M."/>
            <person name="Hauser L."/>
            <person name="Kyrpides N."/>
            <person name="Kim E."/>
            <person name="Tebo B.M."/>
            <person name="Richardson P."/>
        </authorList>
    </citation>
    <scope>NUCLEOTIDE SEQUENCE [LARGE SCALE GENOMIC DNA]</scope>
    <source>
        <strain>ATCC BAA-1160 / DSM 100696 / MI-1</strain>
    </source>
</reference>
<proteinExistence type="inferred from homology"/>
<sequence>MALVQPHGGKLTPVLAPKEQRAELKAKAEKLPVIRMSSRESSDCLMLGMGAFSPLTGFMTQADYQGVIDNMHLASGLAWPLPVTLAVTKDQAASIEVGQELALVDDETDIYVGIIKVADKYEYDKVKECKATFFTDDADHPGVQKVMSQGEVYLGGDIVTFSEMGYATKYAGYYAHPAETRALFESKGWSTVCAFQTRNPLHRSHEFLCKIGNEVCDGLFLHPIVGKLKKGDIPAEVRFECYKAHMENYFNPATIEMRVYPMEMRYAGPKEAILHAIFRQNFGCSHILVGRDHAGVGSYYTAYQAQEIFDEFKPGEILCQPIKVTASYYCKKCMGMATEKTCPHTKEDRIAISGTKVREMFSKGELPPLEFGRKEVLEILTKYYQSLEK</sequence>
<name>SAT_DESRM</name>
<gene>
    <name evidence="1" type="primary">sat</name>
    <name type="ordered locus">Dred_0635</name>
</gene>
<comment type="catalytic activity">
    <reaction evidence="1">
        <text>sulfate + ATP + H(+) = adenosine 5'-phosphosulfate + diphosphate</text>
        <dbReference type="Rhea" id="RHEA:18133"/>
        <dbReference type="ChEBI" id="CHEBI:15378"/>
        <dbReference type="ChEBI" id="CHEBI:16189"/>
        <dbReference type="ChEBI" id="CHEBI:30616"/>
        <dbReference type="ChEBI" id="CHEBI:33019"/>
        <dbReference type="ChEBI" id="CHEBI:58243"/>
        <dbReference type="EC" id="2.7.7.4"/>
    </reaction>
</comment>
<comment type="pathway">
    <text evidence="1">Sulfur metabolism; hydrogen sulfide biosynthesis; sulfite from sulfate: step 1/3.</text>
</comment>
<comment type="similarity">
    <text evidence="1">Belongs to the sulfate adenylyltransferase family.</text>
</comment>
<evidence type="ECO:0000255" key="1">
    <source>
        <dbReference type="HAMAP-Rule" id="MF_00066"/>
    </source>
</evidence>
<keyword id="KW-0067">ATP-binding</keyword>
<keyword id="KW-0547">Nucleotide-binding</keyword>
<keyword id="KW-0548">Nucleotidyltransferase</keyword>
<keyword id="KW-1185">Reference proteome</keyword>
<keyword id="KW-0808">Transferase</keyword>